<proteinExistence type="evidence at protein level"/>
<organism>
    <name type="scientific">Mus musculus</name>
    <name type="common">Mouse</name>
    <dbReference type="NCBI Taxonomy" id="10090"/>
    <lineage>
        <taxon>Eukaryota</taxon>
        <taxon>Metazoa</taxon>
        <taxon>Chordata</taxon>
        <taxon>Craniata</taxon>
        <taxon>Vertebrata</taxon>
        <taxon>Euteleostomi</taxon>
        <taxon>Mammalia</taxon>
        <taxon>Eutheria</taxon>
        <taxon>Euarchontoglires</taxon>
        <taxon>Glires</taxon>
        <taxon>Rodentia</taxon>
        <taxon>Myomorpha</taxon>
        <taxon>Muroidea</taxon>
        <taxon>Muridae</taxon>
        <taxon>Murinae</taxon>
        <taxon>Mus</taxon>
        <taxon>Mus</taxon>
    </lineage>
</organism>
<comment type="function">
    <text evidence="4 10 12 13 14 15">Proline-directed serine/threonine-protein kinase essential for neuronal cell cycle arrest and differentiation and may be involved in apoptotic cell death in neuronal diseases by triggering abortive cell cycle re-entry. Interacts with D1 and D3-type G1 cyclins. Phosphorylates SRC, NOS3, VIM/vimentin, p35/CDK5R1, MEF2A, SIPA1L1, SH3GLB1, PXN, PAK1, MCAM/MUC18, SEPT5, SYN1, DNM1, AMPH, SYNJ1, CDK16, RAC1, RHOA, CDC42, TONEBP/NFAT5, MAPT/TAU, MAP1B, histone H1, p53/TP53, HDAC1, APEX1, PTK2/FAK1, huntingtin/HTT, ATM, MAP2, NEFH and NEFM. Regulates several neuronal development and physiological processes including neuronal survival, migration and differentiation, axonal and neurite growth, synaptogenesis, oligodendrocyte differentiation, synaptic plasticity and neurotransmission, by phosphorylating key proteins. Negatively regulates the CACNA1B/CAV2.2 -mediated Ca(2+) release probability at hippocampal neuronal soma and synaptic terminals (By similarity). Activated by interaction with CDK5R1 (p35) and CDK5R2 (p39), especially in postmitotic neurons, and promotes CDK5R1 (p35) expression in an autostimulation loop. Phosphorylates many downstream substrates such as Rho and Ras family small GTPases (e.g. PAK1, RAC1, RHOA, CDC42) or microtubule-binding proteins (e.g. MAPT/TAU, MAP2, MAP1B), and modulates actin dynamics to regulate neurite growth and/or spine morphogenesis. Also phosphorylates exocytosis associated proteins such as MCAM/MUC18, SEPT5, SYN1, and CDK16/PCTAIRE1 as well as endocytosis associated proteins such as DNM1, AMPH and SYNJ1 at synaptic terminals. In the mature central nervous system (CNS), regulates neurotransmitter movements by phosphorylating substrates associated with neurotransmitter release and synapse plasticity; synaptic vesicle exocytosis, vesicles fusion with the presynaptic membrane, and endocytosis. Promotes cell survival by activating anti-apoptotic proteins BCL2 and STAT3, and negatively regulating of JNK3/MAPK10 activity. Phosphorylation of p53/TP53 in response to genotoxic and oxidative stresses enhances its stabilization by preventing ubiquitin ligase-mediated proteasomal degradation, and induces transactivation of p53/TP53 target genes, thus regulating apoptosis. Phosphorylation of p35/CDK5R1 enhances its stabilization by preventing calpain-mediated proteolysis producing p25/CDK5R1 and avoiding ubiquitin ligase-mediated proteasomal degradation. During aberrant cell-cycle activity and DNA damage, p25/CDK5 activity elicits cell-cycle activity and double-strand DNA breaks that precedes neuronal death by deregulating HDAC1. DNA damage triggered phosphorylation of huntingtin/HTT in nuclei of neurons protects neurons against polyglutamine expansion as well as DNA damage mediated toxicity. Phosphorylation of PXN reduces its interaction with PTK2/FAK1 in matrix-cell focal adhesions (MCFA) during oligodendrocytes (OLs) differentiation. Negative regulator of Wnt/beta-catenin signaling pathway. Activator of the GAIT (IFN-gamma-activated inhibitor of translation) pathway, which suppresses expression of a post-transcriptional regulon of proinflammatory genes in myeloid cells; phosphorylates the linker domain of glutamyl-prolyl tRNA synthetase (EPRS) in a IFN-gamma-dependent manner, the initial event in assembly of the GAIT complex. Phosphorylation of SH3GLB1 is required for autophagy induction in starved neurons. Phosphorylation of TONEBP/NFAT5 in response to osmotic stress mediates its rapid nuclear localization. MEF2 is inactivated by phosphorylation in nucleus in response to neurotoxin, thus leading to neuronal apoptosis. APEX1 AP-endodeoxyribonuclease is repressed by phosphorylation, resulting in accumulation of DNA damage and contributing to neuronal death. NOS3 phosphorylation down regulates NOS3-derived nitrite (NO) levels. SRC phosphorylation mediates its ubiquitin-dependent degradation and thus leads to cytoskeletal reorganization. May regulate endothelial cell migration and angiogenesis via the modulation of lamellipodia formation. Involved in dendritic spine morphogenesis by mediating the EFNA1-EPHA4 signaling. The complex p35/CDK5 participates in the regulation of the circadian clock by modulating the function of CLOCK protein: phosphorylates CLOCK at 'Thr-451' and 'Thr-461' and regulates the transcriptional activity of the CLOCK-BMAL1 heterodimer in association with altered stability and subcellular distribution.</text>
</comment>
<comment type="catalytic activity">
    <reaction>
        <text>L-seryl-[protein] + ATP = O-phospho-L-seryl-[protein] + ADP + H(+)</text>
        <dbReference type="Rhea" id="RHEA:17989"/>
        <dbReference type="Rhea" id="RHEA-COMP:9863"/>
        <dbReference type="Rhea" id="RHEA-COMP:11604"/>
        <dbReference type="ChEBI" id="CHEBI:15378"/>
        <dbReference type="ChEBI" id="CHEBI:29999"/>
        <dbReference type="ChEBI" id="CHEBI:30616"/>
        <dbReference type="ChEBI" id="CHEBI:83421"/>
        <dbReference type="ChEBI" id="CHEBI:456216"/>
        <dbReference type="EC" id="2.7.11.1"/>
    </reaction>
</comment>
<comment type="catalytic activity">
    <reaction>
        <text>L-threonyl-[protein] + ATP = O-phospho-L-threonyl-[protein] + ADP + H(+)</text>
        <dbReference type="Rhea" id="RHEA:46608"/>
        <dbReference type="Rhea" id="RHEA-COMP:11060"/>
        <dbReference type="Rhea" id="RHEA-COMP:11605"/>
        <dbReference type="ChEBI" id="CHEBI:15378"/>
        <dbReference type="ChEBI" id="CHEBI:30013"/>
        <dbReference type="ChEBI" id="CHEBI:30616"/>
        <dbReference type="ChEBI" id="CHEBI:61977"/>
        <dbReference type="ChEBI" id="CHEBI:456216"/>
        <dbReference type="EC" id="2.7.11.1"/>
    </reaction>
</comment>
<comment type="activity regulation">
    <text evidence="1">Inhibited by 2-(1-ethyl-2-hydroxyethylamino)-6-benzylamino-9-isopropylpurine (roscovitine), 1-isopropyl-4-aminobenzyl-6-ether-linked benzimidazoles, resveratrol, AT-7519 and olomoucine. Activated by CDK5R1 (p35) and CDK5R2 (p39) during the development of the nervous system; degradation of CDK5R1 (p35) and CDK5R2 (p39) by proteasome result in down regulation of kinase activity, during this process, CDK5 phosphorylates p35 and induces its ubiquitination and subsequent degradation. Kinase activity is mainly determined by the amount of p35 available and subcellular location; reversible association to plasma membrane inhibits activity. Long-term inactivation as well as CDK5R1 (p25)-mediated hyperactivation of CDK5 triggers cell death. The pro-death activity of hyperactivated CDK5 is suppressed by membrane association of CDK5, via myristoylation of p35. Brain-derived neurotrophic factor, glial-derived neurotrophic factor, nerve growth factor (NGF), retinoic acid, laminin and neuregulin promote activity. Neurotoxicity enhances nuclear activity, thus leading to MEF2 phosphorylation and inhibition prior to apoptosis of cortical neurons. Repression by GSTP1 via p25/p35 translocation prevents neurodegeneration (By similarity).</text>
</comment>
<comment type="subunit">
    <text evidence="1 16">Heterodimer composed of a catalytic subunit CDK5 and a regulatory subunit CDK5R1 (p25) and macromolecular complex composed of at least CDK5, CDK5R1 (p35) and CDK5RAP1 or CDK5RAP2 or CDK5RAP3. Only the heterodimer shows kinase activity. Under neurotoxic stress and neuronal injury conditions, p35 is cleaved by calpain to generate p25 that hyperactivates CDK5, that becomes functionally disabled and often toxic. Found in a trimolecular complex with CABLES1 and ABL1. Interacts with CABLES1 and CABLES2. Interacts with AATK and GSTP1. Binds to HDAC1 when in complex with p25. Interaction with myristoylation p35 promotes CDK5 association with membranes. Both isoforms 1 and 2 interacts with beta-catenin/CTNNB1. Interacts with delta-catenin/CTNND2 and APEX1. Interacts with P53/TP53 in neurons (By similarity). Interacts with EPHA4; may mediate the activation of NGEF by EPHA4M. Interacts with PTK2/FAK1. The complex p35/CDK5 interacts with CLOCK (By similarity). Interacts with HTR6 (PubMed:25078650).</text>
</comment>
<comment type="interaction">
    <interactant intactId="EBI-6510052">
        <id>P49615</id>
    </interactant>
    <interactant intactId="EBI-7840438">
        <id>P61809</id>
        <label>Cdk5r1</label>
    </interactant>
    <organismsDiffer>false</organismsDiffer>
    <experiments>4</experiments>
</comment>
<comment type="subcellular location">
    <subcellularLocation>
        <location evidence="2">Nucleus</location>
    </subcellularLocation>
    <subcellularLocation>
        <location evidence="9">Cytoplasm</location>
    </subcellularLocation>
    <subcellularLocation>
        <location evidence="2">Cell membrane</location>
        <topology evidence="1">Peripheral membrane protein</topology>
    </subcellularLocation>
    <subcellularLocation>
        <location evidence="1">Perikaryon</location>
    </subcellularLocation>
    <subcellularLocation>
        <location evidence="9">Cell projection</location>
        <location evidence="9">Lamellipodium</location>
    </subcellularLocation>
    <subcellularLocation>
        <location evidence="9">Cell projection</location>
        <location evidence="9">Growth cone</location>
    </subcellularLocation>
    <subcellularLocation>
        <location evidence="4">Postsynaptic density</location>
    </subcellularLocation>
    <subcellularLocation>
        <location evidence="4">Synapse</location>
    </subcellularLocation>
    <text evidence="1">In axonal growth cone with extension to the peripheral lamellipodia. Under neurotoxic stress and neuronal injury conditions, CDK5R1 (p35) is cleaved by calpain to generate CDK5R1 (p25) in response to increased intracellular calcium. The elevated level of p25, when in complex with CDK5, leads to its subcellular misallocation as well as its hyperactivation. Colocalizes with CTNND2 in the cell body of neuronal cells, and with CTNNB1 in the cell-cell contacts and plasma membrane of undifferentiated and differentiated neuroblastoma cells. Reversibly attached to the plasma membrane in an inactive form when complexed to dephosphorylated p35 or CDK5R2 (p39), p35 phosphorylation releases this attachment and activates CDK5 (By similarity).</text>
</comment>
<comment type="tissue specificity">
    <text evidence="11">Specifically expressed in postmitotic neurons and postsynaptic muscle.</text>
</comment>
<comment type="PTM">
    <text evidence="1">Phosphorylation on Tyr-15 by ABL1 and FYN, and on Ser-159 by casein kinase 1 promotes kinase activity. By contrast, phosphorylation at Thr-14 inhibits activity (By similarity).</text>
</comment>
<comment type="PTM">
    <text evidence="1">Phosphorylation at Ser-159 is essential for maximal catalytic activity.</text>
</comment>
<comment type="disruption phenotype">
    <text evidence="8 9 11 14">Perinatal mortality associated with severe disruption of the cytoarchitecture of the brain cortex as a result of defects in neuronal migration and cohesiveness, and degenerative changes in large neurons of the brain stem, such as motor neurons in the lower cranial nerve nuclei and spinal cord. Disruption of lamination in the cerebral cortex, hippocampus, and cerebellum. Hypomyelination caused by impaired differentiation of oligodendrocytes.</text>
</comment>
<comment type="similarity">
    <text evidence="18">Belongs to the protein kinase superfamily. CMGC Ser/Thr protein kinase family. CDC2/CDKX subfamily.</text>
</comment>
<accession>P49615</accession>
<keyword id="KW-0007">Acetylation</keyword>
<keyword id="KW-0053">Apoptosis</keyword>
<keyword id="KW-0067">ATP-binding</keyword>
<keyword id="KW-0090">Biological rhythms</keyword>
<keyword id="KW-0131">Cell cycle</keyword>
<keyword id="KW-0132">Cell division</keyword>
<keyword id="KW-1003">Cell membrane</keyword>
<keyword id="KW-0966">Cell projection</keyword>
<keyword id="KW-0963">Cytoplasm</keyword>
<keyword id="KW-0418">Kinase</keyword>
<keyword id="KW-0472">Membrane</keyword>
<keyword id="KW-0523">Neurodegeneration</keyword>
<keyword id="KW-0524">Neurogenesis</keyword>
<keyword id="KW-0547">Nucleotide-binding</keyword>
<keyword id="KW-0539">Nucleus</keyword>
<keyword id="KW-0597">Phosphoprotein</keyword>
<keyword id="KW-1185">Reference proteome</keyword>
<keyword id="KW-0723">Serine/threonine-protein kinase</keyword>
<keyword id="KW-0770">Synapse</keyword>
<keyword id="KW-0808">Transferase</keyword>
<reference key="1">
    <citation type="journal article" date="1994" name="Brain Res.">
        <title>Expression of CDK5 (PSSALRE kinase), a neural cdc2-related protein kinase, in the mature and developing mouse central and peripheral nervous systems.</title>
        <authorList>
            <person name="Ino H."/>
            <person name="Ishizuka T."/>
            <person name="Chiba T."/>
            <person name="Tatibana M."/>
        </authorList>
    </citation>
    <scope>NUCLEOTIDE SEQUENCE [MRNA]</scope>
    <source>
        <tissue>Brain</tissue>
    </source>
</reference>
<reference key="2">
    <citation type="journal article" date="2004" name="Genome Res.">
        <title>The status, quality, and expansion of the NIH full-length cDNA project: the Mammalian Gene Collection (MGC).</title>
        <authorList>
            <consortium name="The MGC Project Team"/>
        </authorList>
    </citation>
    <scope>NUCLEOTIDE SEQUENCE [LARGE SCALE MRNA]</scope>
    <source>
        <strain>C57BL/6J</strain>
        <tissue>Brain</tissue>
    </source>
</reference>
<reference key="3">
    <citation type="journal article" date="1993" name="Gene">
        <title>Novel CDC2-related protein kinases produced in murine hematopoietic stem cells.</title>
        <authorList>
            <person name="Ershler M.A."/>
            <person name="Nagorskaya T.V."/>
            <person name="Visser J.W.M."/>
            <person name="Belyavsky A.V."/>
        </authorList>
    </citation>
    <scope>NUCLEOTIDE SEQUENCE [MRNA] OF 130-165</scope>
    <source>
        <strain>CBA/J</strain>
        <tissue>Bone marrow</tissue>
    </source>
</reference>
<reference key="4">
    <citation type="journal article" date="1995" name="Genomics">
        <title>Molecular cloning and chromosomal mapping of the mouse cyclin-dependent kinase 5 gene.</title>
        <authorList>
            <person name="Ohshima T."/>
            <person name="Nagle J.W."/>
            <person name="Pant H.C."/>
            <person name="Joshi J.B."/>
            <person name="Kozak C.A."/>
            <person name="Brady R.O."/>
            <person name="Kulkarni A.B."/>
        </authorList>
    </citation>
    <scope>NUCLEOTIDE SEQUENCE [GENOMIC DNA] OF 1-12</scope>
</reference>
<reference key="5">
    <citation type="journal article" date="2000" name="Neuron">
        <title>Cables links Cdk5 and c-Abl and facilitates Cdk5 tyrosine phosphorylation, kinase upregulation, and neurite outgrowth.</title>
        <authorList>
            <person name="Zukerberg L.R."/>
            <person name="Patrick G.N."/>
            <person name="Nikolic M."/>
            <person name="Humbert S."/>
            <person name="Wu C.-L."/>
            <person name="Lanier L.M."/>
            <person name="Gertler F.B."/>
            <person name="Vidal M."/>
            <person name="Van Etten R.A."/>
            <person name="Tsai L.-H."/>
        </authorList>
    </citation>
    <scope>IDENTIFICATION IN A TRIMOLECULAR COMPLEX WITH CABLES1 AND ABL1</scope>
    <scope>INTERACTION WITH CABLES1</scope>
    <scope>PHOSPHORYLATION AT TYR-15</scope>
    <scope>MUTAGENESIS OF TYR-15</scope>
</reference>
<reference key="6">
    <citation type="journal article" date="2001" name="J. Neurosci.">
        <title>p35 and p39 are essential for cyclin-dependent kinase 5 function during neurodevelopment.</title>
        <authorList>
            <person name="Ko J."/>
            <person name="Humbert S."/>
            <person name="Bronson R.T."/>
            <person name="Takahashi S."/>
            <person name="Kulkarni A.B."/>
            <person name="Li E."/>
            <person name="Tsai L.H."/>
        </authorList>
    </citation>
    <scope>SUBCELLULAR LOCATION</scope>
    <scope>DISRUPTION PHENOTYPE</scope>
    <scope>ACTIVITY REGULATION</scope>
</reference>
<reference key="7">
    <citation type="journal article" date="2001" name="Proc. Natl. Acad. Sci. U.S.A.">
        <title>Synergistic contributions of cyclin-dependant kinase 5/p35 and Reelin/Dab1 to the positioning of cortical neurons in the developing mouse brain.</title>
        <authorList>
            <person name="Ohshima T."/>
            <person name="Ogawa M."/>
            <person name="Veeranna A."/>
            <person name="Hirasawa M."/>
            <person name="Longenecker G."/>
            <person name="Ishiguro K."/>
            <person name="Pant H.C."/>
            <person name="Brady R.O."/>
            <person name="Kulkarni A.B."/>
            <person name="Mikoshiba K."/>
        </authorList>
    </citation>
    <scope>DISRUPTION PHENOTYPE</scope>
</reference>
<reference key="8">
    <citation type="journal article" date="2002" name="Biochim. Biophys. Acta">
        <title>Ik3-2, a relative to ik3-1/cables, is associated with cdk3, cdk5, and c-abl.</title>
        <authorList>
            <person name="Sato H."/>
            <person name="Nishimoto I."/>
            <person name="Matsuoka M."/>
        </authorList>
    </citation>
    <scope>INTERACTION WITH CABLES2</scope>
</reference>
<reference key="9">
    <citation type="journal article" date="2003" name="Cell">
        <title>Serine 732 phosphorylation of FAK by Cdk5 is important for microtubule organization, nuclear movement, and neuronal migration.</title>
        <authorList>
            <person name="Xie Z."/>
            <person name="Sanada K."/>
            <person name="Samuels B.A."/>
            <person name="Shih H."/>
            <person name="Tsai L.H."/>
        </authorList>
    </citation>
    <scope>FUNCTION</scope>
    <scope>INTERACTION WITH PTK2/FAK1</scope>
</reference>
<reference key="10">
    <citation type="journal article" date="2005" name="Proc. Natl. Acad. Sci. U.S.A.">
        <title>Aberrant motor axon projection, acetylcholine receptor clustering, and neurotransmission in cyclin-dependent kinase 5 null mice.</title>
        <authorList>
            <person name="Fu A.K.Y."/>
            <person name="Ip F.C.F."/>
            <person name="Fu W.-Y."/>
            <person name="Cheung J."/>
            <person name="Wang J.H."/>
            <person name="Yung W.-H."/>
            <person name="Ip N.Y."/>
        </authorList>
    </citation>
    <scope>DISRUPTION PHENOTYPE</scope>
    <scope>TISSUE SPECIFICITY</scope>
</reference>
<reference key="11">
    <citation type="journal article" date="2006" name="Mol. Cell. Proteomics">
        <title>Comprehensive identification of phosphorylation sites in postsynaptic density preparations.</title>
        <authorList>
            <person name="Trinidad J.C."/>
            <person name="Specht C.G."/>
            <person name="Thalhammer A."/>
            <person name="Schoepfer R."/>
            <person name="Burlingame A.L."/>
        </authorList>
    </citation>
    <scope>IDENTIFICATION BY MASS SPECTROMETRY [LARGE SCALE ANALYSIS]</scope>
    <source>
        <tissue>Brain</tissue>
    </source>
</reference>
<reference key="12">
    <citation type="journal article" date="2007" name="Nat. Neurosci.">
        <title>Cdk5 regulates EphA4-mediated dendritic spine retraction through an ephexin1-dependent mechanism.</title>
        <authorList>
            <person name="Fu W.Y."/>
            <person name="Chen Y."/>
            <person name="Sahin M."/>
            <person name="Zhao X.S."/>
            <person name="Shi L."/>
            <person name="Bikoff J.B."/>
            <person name="Lai K.O."/>
            <person name="Yung W.H."/>
            <person name="Fu A.K."/>
            <person name="Greenberg M.E."/>
            <person name="Ip N.Y."/>
        </authorList>
    </citation>
    <scope>FUNCTION IN DENDRITIC SPINE MORPHOGENESIS</scope>
</reference>
<reference key="13">
    <citation type="journal article" date="2010" name="Cell">
        <title>A tissue-specific atlas of mouse protein phosphorylation and expression.</title>
        <authorList>
            <person name="Huttlin E.L."/>
            <person name="Jedrychowski M.P."/>
            <person name="Elias J.E."/>
            <person name="Goswami T."/>
            <person name="Rad R."/>
            <person name="Beausoleil S.A."/>
            <person name="Villen J."/>
            <person name="Haas W."/>
            <person name="Sowa M.E."/>
            <person name="Gygi S.P."/>
        </authorList>
    </citation>
    <scope>IDENTIFICATION BY MASS SPECTROMETRY [LARGE SCALE ANALYSIS]</scope>
    <source>
        <tissue>Brain</tissue>
        <tissue>Brown adipose tissue</tissue>
        <tissue>Kidney</tissue>
        <tissue>Lung</tissue>
        <tissue>Spleen</tissue>
        <tissue>Testis</tissue>
    </source>
</reference>
<reference key="14">
    <citation type="journal article" date="2010" name="Nat. Cell Biol.">
        <title>The role of Cdk5-mediated apurinic/apyrimidinic endonuclease 1 phosphorylation in neuronal death.</title>
        <authorList>
            <person name="Huang E."/>
            <person name="Qu D."/>
            <person name="Zhang Y."/>
            <person name="Venderova K."/>
            <person name="Haque M.E."/>
            <person name="Rousseaux M.W.C."/>
            <person name="Slack R.S."/>
            <person name="Woulfe J.M."/>
            <person name="Park D.S."/>
        </authorList>
    </citation>
    <scope>FUNCTION AS APEX1 KINASE</scope>
    <scope>INTERACTION WITH APEX1</scope>
</reference>
<reference key="15">
    <citation type="journal article" date="2011" name="Neurochem. Res.">
        <title>Hypomyelination Phenotype caused by impaired differentiation of oligodendrocytes in Emx1-cre mediated Cdk5 conditional knockout mice.</title>
        <authorList>
            <person name="He X."/>
            <person name="Takahashi S."/>
            <person name="Suzuki H."/>
            <person name="Hashikawa T."/>
            <person name="Kulkarni A.B."/>
            <person name="Mikoshiba K."/>
            <person name="Ohshima T."/>
        </authorList>
    </citation>
    <scope>DISRUPTION PHENOTYPE</scope>
    <scope>FUNCTION IN OLIGODENDROCYTE DIFFERENTIATION</scope>
</reference>
<reference key="16">
    <citation type="journal article" date="2013" name="J. Biol. Chem.">
        <title>Cyclin-dependent kinase 5 (Cdk5) regulates the function of CLOCK protein by direct phosphorylation.</title>
        <authorList>
            <person name="Kwak Y."/>
            <person name="Jeong J."/>
            <person name="Lee S."/>
            <person name="Park Y.U."/>
            <person name="Lee S.A."/>
            <person name="Han D.H."/>
            <person name="Kim J.H."/>
            <person name="Ohshima T."/>
            <person name="Mikoshiba K."/>
            <person name="Suh Y.H."/>
            <person name="Cho S."/>
            <person name="Park S.K."/>
        </authorList>
    </citation>
    <scope>FUNCTION</scope>
    <scope>INTERACTION WITH CLOCK</scope>
</reference>
<reference key="17">
    <citation type="journal article" date="2013" name="Mol. Cell">
        <title>SIRT5-mediated lysine desuccinylation impacts diverse metabolic pathways.</title>
        <authorList>
            <person name="Park J."/>
            <person name="Chen Y."/>
            <person name="Tishkoff D.X."/>
            <person name="Peng C."/>
            <person name="Tan M."/>
            <person name="Dai L."/>
            <person name="Xie Z."/>
            <person name="Zhang Y."/>
            <person name="Zwaans B.M."/>
            <person name="Skinner M.E."/>
            <person name="Lombard D.B."/>
            <person name="Zhao Y."/>
        </authorList>
    </citation>
    <scope>ACETYLATION [LARGE SCALE ANALYSIS] AT LYS-56</scope>
    <scope>IDENTIFICATION BY MASS SPECTROMETRY [LARGE SCALE ANALYSIS]</scope>
    <source>
        <tissue>Embryonic fibroblast</tissue>
    </source>
</reference>
<reference key="18">
    <citation type="journal article" date="2014" name="Development">
        <title>The serotonin 6 receptor controls neuronal migration during corticogenesis via a ligand-independent Cdk5-dependent mechanism.</title>
        <authorList>
            <person name="Jacobshagen M."/>
            <person name="Niquille M."/>
            <person name="Chaumont-Dubel S."/>
            <person name="Marin P."/>
            <person name="Dayer A."/>
        </authorList>
    </citation>
    <scope>INTERACTION WITH HTR6</scope>
</reference>
<protein>
    <recommendedName>
        <fullName evidence="19">Cyclin-dependent kinase 5</fullName>
        <ecNumber>2.7.11.1</ecNumber>
    </recommendedName>
    <alternativeName>
        <fullName evidence="18">Cell division protein kinase 5</fullName>
    </alternativeName>
    <alternativeName>
        <fullName>Cyclin-dependent-like kinase 5</fullName>
    </alternativeName>
    <alternativeName>
        <fullName evidence="4">Serine/threonine-protein kinase PSSALRE</fullName>
    </alternativeName>
    <alternativeName>
        <fullName evidence="3">Tau protein kinase II catalytic subunit</fullName>
        <shortName evidence="3">TPKII catalytic subunit</shortName>
    </alternativeName>
</protein>
<dbReference type="EC" id="2.7.11.1"/>
<dbReference type="EMBL" id="D29678">
    <property type="protein sequence ID" value="BAA06148.1"/>
    <property type="molecule type" value="mRNA"/>
</dbReference>
<dbReference type="EMBL" id="BC052007">
    <property type="protein sequence ID" value="AAH52007.1"/>
    <property type="molecule type" value="mRNA"/>
</dbReference>
<dbReference type="EMBL" id="X64604">
    <property type="protein sequence ID" value="CAA45888.1"/>
    <property type="molecule type" value="mRNA"/>
</dbReference>
<dbReference type="EMBL" id="S80121">
    <property type="status" value="NOT_ANNOTATED_CDS"/>
    <property type="molecule type" value="Genomic_DNA"/>
</dbReference>
<dbReference type="CCDS" id="CCDS51434.1"/>
<dbReference type="PIR" id="I49592">
    <property type="entry name" value="I49592"/>
</dbReference>
<dbReference type="RefSeq" id="NP_031694.1">
    <property type="nucleotide sequence ID" value="NM_007668.4"/>
</dbReference>
<dbReference type="SMR" id="P49615"/>
<dbReference type="BioGRID" id="198646">
    <property type="interactions" value="41"/>
</dbReference>
<dbReference type="ComplexPortal" id="CPX-3143">
    <property type="entry name" value="Cyclin-dependent protein kinase 5 holoenzyme complex, p35 variant"/>
</dbReference>
<dbReference type="ComplexPortal" id="CPX-3144">
    <property type="entry name" value="Cyclin-dependent protein kinase 5 holoenzyme complex, p25 variant"/>
</dbReference>
<dbReference type="ComplexPortal" id="CPX-3145">
    <property type="entry name" value="Cyclin-dependent protein kinase 5 holoenzyme complex, p39 variant"/>
</dbReference>
<dbReference type="CORUM" id="P49615"/>
<dbReference type="DIP" id="DIP-29353N"/>
<dbReference type="ELM" id="P49615"/>
<dbReference type="FunCoup" id="P49615">
    <property type="interactions" value="1508"/>
</dbReference>
<dbReference type="IntAct" id="P49615">
    <property type="interactions" value="14"/>
</dbReference>
<dbReference type="MINT" id="P49615"/>
<dbReference type="STRING" id="10090.ENSMUSP00000030814"/>
<dbReference type="ChEMBL" id="CHEMBL3885555"/>
<dbReference type="GlyGen" id="P49615">
    <property type="glycosylation" value="1 site, 1 O-linked glycan (1 site)"/>
</dbReference>
<dbReference type="iPTMnet" id="P49615"/>
<dbReference type="PhosphoSitePlus" id="P49615"/>
<dbReference type="SwissPalm" id="P49615"/>
<dbReference type="jPOST" id="P49615"/>
<dbReference type="PaxDb" id="10090-ENSMUSP00000030814"/>
<dbReference type="PeptideAtlas" id="P49615"/>
<dbReference type="ProteomicsDB" id="281144"/>
<dbReference type="Pumba" id="P49615"/>
<dbReference type="Antibodypedia" id="4556">
    <property type="antibodies" value="1028 antibodies from 43 providers"/>
</dbReference>
<dbReference type="DNASU" id="12568"/>
<dbReference type="Ensembl" id="ENSMUST00000030814.11">
    <property type="protein sequence ID" value="ENSMUSP00000030814.7"/>
    <property type="gene ID" value="ENSMUSG00000028969.11"/>
</dbReference>
<dbReference type="GeneID" id="12568"/>
<dbReference type="KEGG" id="mmu:12568"/>
<dbReference type="UCSC" id="uc008wrl.1">
    <property type="organism name" value="mouse"/>
</dbReference>
<dbReference type="AGR" id="MGI:101765"/>
<dbReference type="CTD" id="1020"/>
<dbReference type="MGI" id="MGI:101765">
    <property type="gene designation" value="Cdk5"/>
</dbReference>
<dbReference type="VEuPathDB" id="HostDB:ENSMUSG00000028969"/>
<dbReference type="eggNOG" id="KOG0662">
    <property type="taxonomic scope" value="Eukaryota"/>
</dbReference>
<dbReference type="GeneTree" id="ENSGT00940000160805"/>
<dbReference type="HOGENOM" id="CLU_000288_181_1_1"/>
<dbReference type="InParanoid" id="P49615"/>
<dbReference type="OMA" id="NWQIFVP"/>
<dbReference type="OrthoDB" id="1732493at2759"/>
<dbReference type="PhylomeDB" id="P49615"/>
<dbReference type="TreeFam" id="TF101023"/>
<dbReference type="BRENDA" id="2.7.11.22">
    <property type="organism ID" value="3474"/>
</dbReference>
<dbReference type="Reactome" id="R-MMU-180024">
    <property type="pathway name" value="DARPP-32 events"/>
</dbReference>
<dbReference type="Reactome" id="R-MMU-399956">
    <property type="pathway name" value="CRMPs in Sema3A signaling"/>
</dbReference>
<dbReference type="Reactome" id="R-MMU-6804756">
    <property type="pathway name" value="Regulation of TP53 Activity through Phosphorylation"/>
</dbReference>
<dbReference type="BioGRID-ORCS" id="12568">
    <property type="hits" value="8 hits in 83 CRISPR screens"/>
</dbReference>
<dbReference type="CD-CODE" id="CE726F99">
    <property type="entry name" value="Postsynaptic density"/>
</dbReference>
<dbReference type="ChiTaRS" id="Cdk5">
    <property type="organism name" value="mouse"/>
</dbReference>
<dbReference type="PRO" id="PR:P49615"/>
<dbReference type="Proteomes" id="UP000000589">
    <property type="component" value="Chromosome 5"/>
</dbReference>
<dbReference type="RNAct" id="P49615">
    <property type="molecule type" value="protein"/>
</dbReference>
<dbReference type="Bgee" id="ENSMUSG00000028969">
    <property type="expression patterns" value="Expressed in dentate gyrus of hippocampal formation granule cell and 258 other cell types or tissues"/>
</dbReference>
<dbReference type="ExpressionAtlas" id="P49615">
    <property type="expression patterns" value="baseline and differential"/>
</dbReference>
<dbReference type="GO" id="GO:0030424">
    <property type="term" value="C:axon"/>
    <property type="evidence" value="ECO:0000314"/>
    <property type="project" value="MGI"/>
</dbReference>
<dbReference type="GO" id="GO:0000307">
    <property type="term" value="C:cyclin-dependent protein kinase holoenzyme complex"/>
    <property type="evidence" value="ECO:0007669"/>
    <property type="project" value="Ensembl"/>
</dbReference>
<dbReference type="GO" id="GO:0005737">
    <property type="term" value="C:cytoplasm"/>
    <property type="evidence" value="ECO:0000314"/>
    <property type="project" value="MGI"/>
</dbReference>
<dbReference type="GO" id="GO:0005829">
    <property type="term" value="C:cytosol"/>
    <property type="evidence" value="ECO:0000314"/>
    <property type="project" value="MGI"/>
</dbReference>
<dbReference type="GO" id="GO:0030425">
    <property type="term" value="C:dendrite"/>
    <property type="evidence" value="ECO:0000250"/>
    <property type="project" value="UniProtKB"/>
</dbReference>
<dbReference type="GO" id="GO:0030175">
    <property type="term" value="C:filopodium"/>
    <property type="evidence" value="ECO:0000314"/>
    <property type="project" value="MGI"/>
</dbReference>
<dbReference type="GO" id="GO:0030426">
    <property type="term" value="C:growth cone"/>
    <property type="evidence" value="ECO:0000250"/>
    <property type="project" value="UniProtKB"/>
</dbReference>
<dbReference type="GO" id="GO:0030027">
    <property type="term" value="C:lamellipodium"/>
    <property type="evidence" value="ECO:0000314"/>
    <property type="project" value="MGI"/>
</dbReference>
<dbReference type="GO" id="GO:0016020">
    <property type="term" value="C:membrane"/>
    <property type="evidence" value="ECO:0000250"/>
    <property type="project" value="UniProtKB"/>
</dbReference>
<dbReference type="GO" id="GO:0031594">
    <property type="term" value="C:neuromuscular junction"/>
    <property type="evidence" value="ECO:0000250"/>
    <property type="project" value="UniProtKB"/>
</dbReference>
<dbReference type="GO" id="GO:0043025">
    <property type="term" value="C:neuronal cell body"/>
    <property type="evidence" value="ECO:0000250"/>
    <property type="project" value="UniProtKB"/>
</dbReference>
<dbReference type="GO" id="GO:0005654">
    <property type="term" value="C:nucleoplasm"/>
    <property type="evidence" value="ECO:0000304"/>
    <property type="project" value="Reactome"/>
</dbReference>
<dbReference type="GO" id="GO:0005634">
    <property type="term" value="C:nucleus"/>
    <property type="evidence" value="ECO:0000314"/>
    <property type="project" value="MGI"/>
</dbReference>
<dbReference type="GO" id="GO:0043204">
    <property type="term" value="C:perikaryon"/>
    <property type="evidence" value="ECO:0007669"/>
    <property type="project" value="UniProtKB-SubCell"/>
</dbReference>
<dbReference type="GO" id="GO:0005886">
    <property type="term" value="C:plasma membrane"/>
    <property type="evidence" value="ECO:0007669"/>
    <property type="project" value="UniProtKB-SubCell"/>
</dbReference>
<dbReference type="GO" id="GO:0014069">
    <property type="term" value="C:postsynaptic density"/>
    <property type="evidence" value="ECO:0000250"/>
    <property type="project" value="UniProtKB"/>
</dbReference>
<dbReference type="GO" id="GO:0016533">
    <property type="term" value="C:protein kinase 5 complex"/>
    <property type="evidence" value="ECO:0000353"/>
    <property type="project" value="ComplexPortal"/>
</dbReference>
<dbReference type="GO" id="GO:0030549">
    <property type="term" value="F:acetylcholine receptor activator activity"/>
    <property type="evidence" value="ECO:0000314"/>
    <property type="project" value="UniProtKB"/>
</dbReference>
<dbReference type="GO" id="GO:0005524">
    <property type="term" value="F:ATP binding"/>
    <property type="evidence" value="ECO:0007669"/>
    <property type="project" value="UniProtKB-KW"/>
</dbReference>
<dbReference type="GO" id="GO:0004693">
    <property type="term" value="F:cyclin-dependent protein serine/threonine kinase activity"/>
    <property type="evidence" value="ECO:0000250"/>
    <property type="project" value="UniProtKB"/>
</dbReference>
<dbReference type="GO" id="GO:0005176">
    <property type="term" value="F:ErbB-2 class receptor binding"/>
    <property type="evidence" value="ECO:0000314"/>
    <property type="project" value="UniProtKB"/>
</dbReference>
<dbReference type="GO" id="GO:0043125">
    <property type="term" value="F:ErbB-3 class receptor binding"/>
    <property type="evidence" value="ECO:0000314"/>
    <property type="project" value="UniProtKB"/>
</dbReference>
<dbReference type="GO" id="GO:0051879">
    <property type="term" value="F:Hsp90 protein binding"/>
    <property type="evidence" value="ECO:0000353"/>
    <property type="project" value="ARUK-UCL"/>
</dbReference>
<dbReference type="GO" id="GO:0016301">
    <property type="term" value="F:kinase activity"/>
    <property type="evidence" value="ECO:0000250"/>
    <property type="project" value="UniProtKB"/>
</dbReference>
<dbReference type="GO" id="GO:0002039">
    <property type="term" value="F:p53 binding"/>
    <property type="evidence" value="ECO:0000353"/>
    <property type="project" value="MGI"/>
</dbReference>
<dbReference type="GO" id="GO:0004672">
    <property type="term" value="F:protein kinase activity"/>
    <property type="evidence" value="ECO:0000314"/>
    <property type="project" value="MGI"/>
</dbReference>
<dbReference type="GO" id="GO:0106310">
    <property type="term" value="F:protein serine kinase activity"/>
    <property type="evidence" value="ECO:0007669"/>
    <property type="project" value="RHEA"/>
</dbReference>
<dbReference type="GO" id="GO:0004674">
    <property type="term" value="F:protein serine/threonine kinase activity"/>
    <property type="evidence" value="ECO:0000314"/>
    <property type="project" value="ARUK-UCL"/>
</dbReference>
<dbReference type="GO" id="GO:0050321">
    <property type="term" value="F:tau-protein kinase activity"/>
    <property type="evidence" value="ECO:0000250"/>
    <property type="project" value="UniProtKB"/>
</dbReference>
<dbReference type="GO" id="GO:0006915">
    <property type="term" value="P:apoptotic process"/>
    <property type="evidence" value="ECO:0000314"/>
    <property type="project" value="MGI"/>
</dbReference>
<dbReference type="GO" id="GO:0008306">
    <property type="term" value="P:associative learning"/>
    <property type="evidence" value="ECO:0000315"/>
    <property type="project" value="MGI"/>
</dbReference>
<dbReference type="GO" id="GO:0007409">
    <property type="term" value="P:axonogenesis"/>
    <property type="evidence" value="ECO:0000315"/>
    <property type="project" value="MGI"/>
</dbReference>
<dbReference type="GO" id="GO:0048148">
    <property type="term" value="P:behavioral response to cocaine"/>
    <property type="evidence" value="ECO:0000315"/>
    <property type="project" value="MGI"/>
</dbReference>
<dbReference type="GO" id="GO:0070509">
    <property type="term" value="P:calcium ion import"/>
    <property type="evidence" value="ECO:0000315"/>
    <property type="project" value="MGI"/>
</dbReference>
<dbReference type="GO" id="GO:0051301">
    <property type="term" value="P:cell division"/>
    <property type="evidence" value="ECO:0007669"/>
    <property type="project" value="UniProtKB-KW"/>
</dbReference>
<dbReference type="GO" id="GO:0016477">
    <property type="term" value="P:cell migration"/>
    <property type="evidence" value="ECO:0000314"/>
    <property type="project" value="MGI"/>
</dbReference>
<dbReference type="GO" id="GO:0007160">
    <property type="term" value="P:cell-matrix adhesion"/>
    <property type="evidence" value="ECO:0000314"/>
    <property type="project" value="MGI"/>
</dbReference>
<dbReference type="GO" id="GO:0021954">
    <property type="term" value="P:central nervous system neuron development"/>
    <property type="evidence" value="ECO:0000315"/>
    <property type="project" value="MGI"/>
</dbReference>
<dbReference type="GO" id="GO:0021695">
    <property type="term" value="P:cerebellar cortex development"/>
    <property type="evidence" value="ECO:0000315"/>
    <property type="project" value="MGI"/>
</dbReference>
<dbReference type="GO" id="GO:0021697">
    <property type="term" value="P:cerebellar cortex formation"/>
    <property type="evidence" value="ECO:0000315"/>
    <property type="project" value="MGI"/>
</dbReference>
<dbReference type="GO" id="GO:0021549">
    <property type="term" value="P:cerebellum development"/>
    <property type="evidence" value="ECO:0000315"/>
    <property type="project" value="MGI"/>
</dbReference>
<dbReference type="GO" id="GO:0021987">
    <property type="term" value="P:cerebral cortex development"/>
    <property type="evidence" value="ECO:0000315"/>
    <property type="project" value="MGI"/>
</dbReference>
<dbReference type="GO" id="GO:0022038">
    <property type="term" value="P:corpus callosum development"/>
    <property type="evidence" value="ECO:0000315"/>
    <property type="project" value="MGI"/>
</dbReference>
<dbReference type="GO" id="GO:0048813">
    <property type="term" value="P:dendrite morphogenesis"/>
    <property type="evidence" value="ECO:0000315"/>
    <property type="project" value="MGI"/>
</dbReference>
<dbReference type="GO" id="GO:0051649">
    <property type="term" value="P:establishment of localization in cell"/>
    <property type="evidence" value="ECO:0000315"/>
    <property type="project" value="MGI"/>
</dbReference>
<dbReference type="GO" id="GO:0060079">
    <property type="term" value="P:excitatory postsynaptic potential"/>
    <property type="evidence" value="ECO:0000315"/>
    <property type="project" value="MGI"/>
</dbReference>
<dbReference type="GO" id="GO:0030900">
    <property type="term" value="P:forebrain development"/>
    <property type="evidence" value="ECO:0000315"/>
    <property type="project" value="MGI"/>
</dbReference>
<dbReference type="GO" id="GO:0021766">
    <property type="term" value="P:hippocampus development"/>
    <property type="evidence" value="ECO:0000315"/>
    <property type="project" value="MGI"/>
</dbReference>
<dbReference type="GO" id="GO:0006886">
    <property type="term" value="P:intracellular protein transport"/>
    <property type="evidence" value="ECO:0000315"/>
    <property type="project" value="MGI"/>
</dbReference>
<dbReference type="GO" id="GO:0021819">
    <property type="term" value="P:layer formation in cerebral cortex"/>
    <property type="evidence" value="ECO:0000315"/>
    <property type="project" value="MGI"/>
</dbReference>
<dbReference type="GO" id="GO:0008045">
    <property type="term" value="P:motor neuron axon guidance"/>
    <property type="evidence" value="ECO:0000315"/>
    <property type="project" value="MGI"/>
</dbReference>
<dbReference type="GO" id="GO:0030517">
    <property type="term" value="P:negative regulation of axon extension"/>
    <property type="evidence" value="ECO:0000316"/>
    <property type="project" value="MGI"/>
</dbReference>
<dbReference type="GO" id="GO:0045786">
    <property type="term" value="P:negative regulation of cell cycle"/>
    <property type="evidence" value="ECO:0000315"/>
    <property type="project" value="MGI"/>
</dbReference>
<dbReference type="GO" id="GO:0045892">
    <property type="term" value="P:negative regulation of DNA-templated transcription"/>
    <property type="evidence" value="ECO:0007669"/>
    <property type="project" value="Ensembl"/>
</dbReference>
<dbReference type="GO" id="GO:0046826">
    <property type="term" value="P:negative regulation of protein export from nucleus"/>
    <property type="evidence" value="ECO:0000315"/>
    <property type="project" value="MGI"/>
</dbReference>
<dbReference type="GO" id="GO:0031397">
    <property type="term" value="P:negative regulation of protein ubiquitination"/>
    <property type="evidence" value="ECO:0000315"/>
    <property type="project" value="MGI"/>
</dbReference>
<dbReference type="GO" id="GO:0045861">
    <property type="term" value="P:negative regulation of proteolysis"/>
    <property type="evidence" value="ECO:0007669"/>
    <property type="project" value="Ensembl"/>
</dbReference>
<dbReference type="GO" id="GO:0031914">
    <property type="term" value="P:negative regulation of synaptic plasticity"/>
    <property type="evidence" value="ECO:0000315"/>
    <property type="project" value="MGI"/>
</dbReference>
<dbReference type="GO" id="GO:0051402">
    <property type="term" value="P:neuron apoptotic process"/>
    <property type="evidence" value="ECO:0000315"/>
    <property type="project" value="MGI"/>
</dbReference>
<dbReference type="GO" id="GO:0030182">
    <property type="term" value="P:neuron differentiation"/>
    <property type="evidence" value="ECO:0000315"/>
    <property type="project" value="MGI"/>
</dbReference>
<dbReference type="GO" id="GO:0001764">
    <property type="term" value="P:neuron migration"/>
    <property type="evidence" value="ECO:0000315"/>
    <property type="project" value="MGI"/>
</dbReference>
<dbReference type="GO" id="GO:0031175">
    <property type="term" value="P:neuron projection development"/>
    <property type="evidence" value="ECO:0000250"/>
    <property type="project" value="UniProtKB"/>
</dbReference>
<dbReference type="GO" id="GO:0048709">
    <property type="term" value="P:oligodendrocyte differentiation"/>
    <property type="evidence" value="ECO:0007669"/>
    <property type="project" value="Ensembl"/>
</dbReference>
<dbReference type="GO" id="GO:0018105">
    <property type="term" value="P:peptidyl-serine phosphorylation"/>
    <property type="evidence" value="ECO:0000315"/>
    <property type="project" value="ARUK-UCL"/>
</dbReference>
<dbReference type="GO" id="GO:0018107">
    <property type="term" value="P:peptidyl-threonine phosphorylation"/>
    <property type="evidence" value="ECO:0000315"/>
    <property type="project" value="ARUK-UCL"/>
</dbReference>
<dbReference type="GO" id="GO:0045956">
    <property type="term" value="P:positive regulation of calcium ion-dependent exocytosis"/>
    <property type="evidence" value="ECO:0000314"/>
    <property type="project" value="MGI"/>
</dbReference>
<dbReference type="GO" id="GO:0043525">
    <property type="term" value="P:positive regulation of neuron apoptotic process"/>
    <property type="evidence" value="ECO:0000250"/>
    <property type="project" value="UniProtKB"/>
</dbReference>
<dbReference type="GO" id="GO:0090314">
    <property type="term" value="P:positive regulation of protein targeting to membrane"/>
    <property type="evidence" value="ECO:0000315"/>
    <property type="project" value="MGI"/>
</dbReference>
<dbReference type="GO" id="GO:0035418">
    <property type="term" value="P:protein localization to synapse"/>
    <property type="evidence" value="ECO:0000315"/>
    <property type="project" value="MGI"/>
</dbReference>
<dbReference type="GO" id="GO:0032801">
    <property type="term" value="P:receptor catabolic process"/>
    <property type="evidence" value="ECO:0000315"/>
    <property type="project" value="MGI"/>
</dbReference>
<dbReference type="GO" id="GO:0043113">
    <property type="term" value="P:receptor clustering"/>
    <property type="evidence" value="ECO:0000315"/>
    <property type="project" value="MGI"/>
</dbReference>
<dbReference type="GO" id="GO:0030334">
    <property type="term" value="P:regulation of cell migration"/>
    <property type="evidence" value="ECO:0000315"/>
    <property type="project" value="MGI"/>
</dbReference>
<dbReference type="GO" id="GO:0061001">
    <property type="term" value="P:regulation of dendritic spine morphogenesis"/>
    <property type="evidence" value="ECO:0000315"/>
    <property type="project" value="UniProtKB"/>
</dbReference>
<dbReference type="GO" id="GO:0060078">
    <property type="term" value="P:regulation of postsynaptic membrane potential"/>
    <property type="evidence" value="ECO:0000315"/>
    <property type="project" value="MGI"/>
</dbReference>
<dbReference type="GO" id="GO:1903076">
    <property type="term" value="P:regulation of protein localization to plasma membrane"/>
    <property type="evidence" value="ECO:0000315"/>
    <property type="project" value="ARUK-UCL"/>
</dbReference>
<dbReference type="GO" id="GO:0048167">
    <property type="term" value="P:regulation of synaptic plasticity"/>
    <property type="evidence" value="ECO:0000250"/>
    <property type="project" value="UniProtKB"/>
</dbReference>
<dbReference type="GO" id="GO:0051966">
    <property type="term" value="P:regulation of synaptic transmission, glutamatergic"/>
    <property type="evidence" value="ECO:0000315"/>
    <property type="project" value="ARUK-UCL"/>
</dbReference>
<dbReference type="GO" id="GO:0042220">
    <property type="term" value="P:response to cocaine"/>
    <property type="evidence" value="ECO:0000315"/>
    <property type="project" value="MGI"/>
</dbReference>
<dbReference type="GO" id="GO:0048511">
    <property type="term" value="P:rhythmic process"/>
    <property type="evidence" value="ECO:0007669"/>
    <property type="project" value="UniProtKB-KW"/>
</dbReference>
<dbReference type="GO" id="GO:0014044">
    <property type="term" value="P:Schwann cell development"/>
    <property type="evidence" value="ECO:0000315"/>
    <property type="project" value="MGI"/>
</dbReference>
<dbReference type="GO" id="GO:0019233">
    <property type="term" value="P:sensory perception of pain"/>
    <property type="evidence" value="ECO:0000315"/>
    <property type="project" value="MGI"/>
</dbReference>
<dbReference type="GO" id="GO:0007519">
    <property type="term" value="P:skeletal muscle tissue development"/>
    <property type="evidence" value="ECO:0000314"/>
    <property type="project" value="MGI"/>
</dbReference>
<dbReference type="GO" id="GO:0007416">
    <property type="term" value="P:synapse assembly"/>
    <property type="evidence" value="ECO:0000315"/>
    <property type="project" value="MGI"/>
</dbReference>
<dbReference type="GO" id="GO:0001963">
    <property type="term" value="P:synaptic transmission, dopaminergic"/>
    <property type="evidence" value="ECO:0000315"/>
    <property type="project" value="MGI"/>
</dbReference>
<dbReference type="GO" id="GO:0035249">
    <property type="term" value="P:synaptic transmission, glutamatergic"/>
    <property type="evidence" value="ECO:0000315"/>
    <property type="project" value="MGI"/>
</dbReference>
<dbReference type="GO" id="GO:0021537">
    <property type="term" value="P:telencephalon development"/>
    <property type="evidence" value="ECO:0000315"/>
    <property type="project" value="MGI"/>
</dbReference>
<dbReference type="GO" id="GO:0008542">
    <property type="term" value="P:visual learning"/>
    <property type="evidence" value="ECO:0000315"/>
    <property type="project" value="MGI"/>
</dbReference>
<dbReference type="CDD" id="cd07839">
    <property type="entry name" value="STKc_CDK5"/>
    <property type="match status" value="1"/>
</dbReference>
<dbReference type="FunFam" id="3.30.200.20:FF:000144">
    <property type="entry name" value="Cyclin-dependent kinase 5"/>
    <property type="match status" value="1"/>
</dbReference>
<dbReference type="FunFam" id="1.10.510.10:FF:000184">
    <property type="entry name" value="cyclin-dependent kinase 5 homolog"/>
    <property type="match status" value="1"/>
</dbReference>
<dbReference type="Gene3D" id="3.30.200.20">
    <property type="entry name" value="Phosphorylase Kinase, domain 1"/>
    <property type="match status" value="1"/>
</dbReference>
<dbReference type="Gene3D" id="1.10.510.10">
    <property type="entry name" value="Transferase(Phosphotransferase) domain 1"/>
    <property type="match status" value="1"/>
</dbReference>
<dbReference type="InterPro" id="IPR050108">
    <property type="entry name" value="CDK"/>
</dbReference>
<dbReference type="InterPro" id="IPR011009">
    <property type="entry name" value="Kinase-like_dom_sf"/>
</dbReference>
<dbReference type="InterPro" id="IPR000719">
    <property type="entry name" value="Prot_kinase_dom"/>
</dbReference>
<dbReference type="InterPro" id="IPR017441">
    <property type="entry name" value="Protein_kinase_ATP_BS"/>
</dbReference>
<dbReference type="InterPro" id="IPR008271">
    <property type="entry name" value="Ser/Thr_kinase_AS"/>
</dbReference>
<dbReference type="PANTHER" id="PTHR24056">
    <property type="entry name" value="CELL DIVISION PROTEIN KINASE"/>
    <property type="match status" value="1"/>
</dbReference>
<dbReference type="PANTHER" id="PTHR24056:SF46">
    <property type="entry name" value="CYCLIN-DEPENDENT KINASE 5"/>
    <property type="match status" value="1"/>
</dbReference>
<dbReference type="Pfam" id="PF00069">
    <property type="entry name" value="Pkinase"/>
    <property type="match status" value="1"/>
</dbReference>
<dbReference type="SMART" id="SM00220">
    <property type="entry name" value="S_TKc"/>
    <property type="match status" value="1"/>
</dbReference>
<dbReference type="SUPFAM" id="SSF56112">
    <property type="entry name" value="Protein kinase-like (PK-like)"/>
    <property type="match status" value="1"/>
</dbReference>
<dbReference type="PROSITE" id="PS00107">
    <property type="entry name" value="PROTEIN_KINASE_ATP"/>
    <property type="match status" value="1"/>
</dbReference>
<dbReference type="PROSITE" id="PS50011">
    <property type="entry name" value="PROTEIN_KINASE_DOM"/>
    <property type="match status" value="1"/>
</dbReference>
<dbReference type="PROSITE" id="PS00108">
    <property type="entry name" value="PROTEIN_KINASE_ST"/>
    <property type="match status" value="1"/>
</dbReference>
<evidence type="ECO:0000250" key="1"/>
<evidence type="ECO:0000250" key="2">
    <source>
        <dbReference type="UniProtKB" id="Q00535"/>
    </source>
</evidence>
<evidence type="ECO:0000250" key="3">
    <source>
        <dbReference type="UniProtKB" id="Q02399"/>
    </source>
</evidence>
<evidence type="ECO:0000250" key="4">
    <source>
        <dbReference type="UniProtKB" id="Q03114"/>
    </source>
</evidence>
<evidence type="ECO:0000255" key="5">
    <source>
        <dbReference type="PROSITE-ProRule" id="PRU00159"/>
    </source>
</evidence>
<evidence type="ECO:0000255" key="6">
    <source>
        <dbReference type="PROSITE-ProRule" id="PRU10027"/>
    </source>
</evidence>
<evidence type="ECO:0000269" key="7">
    <source>
    </source>
</evidence>
<evidence type="ECO:0000269" key="8">
    <source>
    </source>
</evidence>
<evidence type="ECO:0000269" key="9">
    <source>
    </source>
</evidence>
<evidence type="ECO:0000269" key="10">
    <source>
    </source>
</evidence>
<evidence type="ECO:0000269" key="11">
    <source>
    </source>
</evidence>
<evidence type="ECO:0000269" key="12">
    <source>
    </source>
</evidence>
<evidence type="ECO:0000269" key="13">
    <source>
    </source>
</evidence>
<evidence type="ECO:0000269" key="14">
    <source>
    </source>
</evidence>
<evidence type="ECO:0000269" key="15">
    <source>
    </source>
</evidence>
<evidence type="ECO:0000269" key="16">
    <source>
    </source>
</evidence>
<evidence type="ECO:0000303" key="17">
    <source>
    </source>
</evidence>
<evidence type="ECO:0000305" key="18"/>
<evidence type="ECO:0000312" key="19">
    <source>
        <dbReference type="MGI" id="MGI:101765"/>
    </source>
</evidence>
<evidence type="ECO:0007744" key="20">
    <source>
    </source>
</evidence>
<name>CDK5_MOUSE</name>
<gene>
    <name evidence="19" type="primary">Cdk5</name>
    <name evidence="19" type="synonym">Cdkn5</name>
    <name evidence="19" type="synonym">Crk6</name>
    <name evidence="17" type="synonym">PSSALRE</name>
</gene>
<feature type="chain" id="PRO_0000085785" description="Cyclin-dependent kinase 5">
    <location>
        <begin position="1"/>
        <end position="292"/>
    </location>
</feature>
<feature type="domain" description="Protein kinase" evidence="5">
    <location>
        <begin position="4"/>
        <end position="286"/>
    </location>
</feature>
<feature type="active site" description="Proton acceptor" evidence="5 6">
    <location>
        <position position="126"/>
    </location>
</feature>
<feature type="binding site" evidence="5">
    <location>
        <begin position="10"/>
        <end position="18"/>
    </location>
    <ligand>
        <name>ATP</name>
        <dbReference type="ChEBI" id="CHEBI:30616"/>
    </ligand>
</feature>
<feature type="binding site" evidence="5">
    <location>
        <position position="33"/>
    </location>
    <ligand>
        <name>ATP</name>
        <dbReference type="ChEBI" id="CHEBI:30616"/>
    </ligand>
</feature>
<feature type="modified residue" description="Phosphotyrosine; by ABL1, EPHA4 and FYN" evidence="7">
    <location>
        <position position="15"/>
    </location>
</feature>
<feature type="modified residue" description="Phosphothreonine" evidence="2">
    <location>
        <position position="17"/>
    </location>
</feature>
<feature type="modified residue" description="N6-acetyllysine" evidence="20">
    <location>
        <position position="56"/>
    </location>
</feature>
<feature type="modified residue" description="Phosphoserine" evidence="2">
    <location>
        <position position="72"/>
    </location>
</feature>
<feature type="modified residue" description="Phosphoserine" evidence="2">
    <location>
        <position position="159"/>
    </location>
</feature>
<feature type="mutagenesis site" description="Loss of tyrosine phosphorylations by CABLES1 and ABL1; decreased activity." evidence="7">
    <original>Y</original>
    <variation>F</variation>
    <location>
        <position position="15"/>
    </location>
</feature>
<sequence length="292" mass="33288">MQKYEKLEKIGEGTYGTVFKAKNRETHEIVALKRVRLDDDDEGVPSSALREICLLKELKHKNIVRLHDVLHSDKKLTLVFEFCDQDLKKYFDSCNGDLDPEIVKSFLFQLLKGLGFCHSRNVLHRDLKPQNLLINRNGELKLADFGLARAFGIPVRCYSAEVVTLWYRPPDVLFGAKLYSTSIDMWSAGCIFAELANAGRPLFPGNDVDDQLKRIFRLLGTPTEEQWPAMTKLPDYKPYPMYPATTSLVNVVPKLNATGRDLLQNLLKCNPVQRISAEEALQHPYFSDFCPP</sequence>